<dbReference type="EC" id="2.1.1.222" evidence="1"/>
<dbReference type="EC" id="2.1.1.64" evidence="1"/>
<dbReference type="EMBL" id="CP000720">
    <property type="protein sequence ID" value="ABS49468.1"/>
    <property type="molecule type" value="Genomic_DNA"/>
</dbReference>
<dbReference type="RefSeq" id="WP_002210820.1">
    <property type="nucleotide sequence ID" value="NC_009708.1"/>
</dbReference>
<dbReference type="SMR" id="A7FKF4"/>
<dbReference type="GeneID" id="57977354"/>
<dbReference type="KEGG" id="ypi:YpsIP31758_2768"/>
<dbReference type="HOGENOM" id="CLU_042432_5_0_6"/>
<dbReference type="UniPathway" id="UPA00232"/>
<dbReference type="Proteomes" id="UP000002412">
    <property type="component" value="Chromosome"/>
</dbReference>
<dbReference type="GO" id="GO:0102208">
    <property type="term" value="F:2-polyprenyl-6-hydroxyphenol methylase activity"/>
    <property type="evidence" value="ECO:0007669"/>
    <property type="project" value="UniProtKB-EC"/>
</dbReference>
<dbReference type="GO" id="GO:0061542">
    <property type="term" value="F:3-demethylubiquinol 3-O-methyltransferase activity"/>
    <property type="evidence" value="ECO:0007669"/>
    <property type="project" value="UniProtKB-UniRule"/>
</dbReference>
<dbReference type="GO" id="GO:0010420">
    <property type="term" value="F:polyprenyldihydroxybenzoate methyltransferase activity"/>
    <property type="evidence" value="ECO:0007669"/>
    <property type="project" value="InterPro"/>
</dbReference>
<dbReference type="GO" id="GO:0032259">
    <property type="term" value="P:methylation"/>
    <property type="evidence" value="ECO:0007669"/>
    <property type="project" value="UniProtKB-KW"/>
</dbReference>
<dbReference type="CDD" id="cd02440">
    <property type="entry name" value="AdoMet_MTases"/>
    <property type="match status" value="1"/>
</dbReference>
<dbReference type="FunFam" id="3.40.50.150:FF:000028">
    <property type="entry name" value="Ubiquinone biosynthesis O-methyltransferase"/>
    <property type="match status" value="1"/>
</dbReference>
<dbReference type="Gene3D" id="3.40.50.150">
    <property type="entry name" value="Vaccinia Virus protein VP39"/>
    <property type="match status" value="1"/>
</dbReference>
<dbReference type="HAMAP" id="MF_00472">
    <property type="entry name" value="UbiG"/>
    <property type="match status" value="1"/>
</dbReference>
<dbReference type="InterPro" id="IPR029063">
    <property type="entry name" value="SAM-dependent_MTases_sf"/>
</dbReference>
<dbReference type="InterPro" id="IPR010233">
    <property type="entry name" value="UbiG_MeTrfase"/>
</dbReference>
<dbReference type="NCBIfam" id="TIGR01983">
    <property type="entry name" value="UbiG"/>
    <property type="match status" value="1"/>
</dbReference>
<dbReference type="PANTHER" id="PTHR43464">
    <property type="entry name" value="METHYLTRANSFERASE"/>
    <property type="match status" value="1"/>
</dbReference>
<dbReference type="PANTHER" id="PTHR43464:SF19">
    <property type="entry name" value="UBIQUINONE BIOSYNTHESIS O-METHYLTRANSFERASE, MITOCHONDRIAL"/>
    <property type="match status" value="1"/>
</dbReference>
<dbReference type="Pfam" id="PF13489">
    <property type="entry name" value="Methyltransf_23"/>
    <property type="match status" value="1"/>
</dbReference>
<dbReference type="SUPFAM" id="SSF53335">
    <property type="entry name" value="S-adenosyl-L-methionine-dependent methyltransferases"/>
    <property type="match status" value="1"/>
</dbReference>
<proteinExistence type="inferred from homology"/>
<sequence length="242" mass="27466">MRAKTTSRHHNVDEQEIAKFEAVASRWWDLEGEFKPLHRINPLRLNYILQRSGGIFEKKVLDVGCGGGILAESMAREGAQVTGLDMGYEPLQVARLHALETGVKLEYVQETVENHAQQHPQHYDVVTCMEMLEHVPDPASVVRACAQLVKPGGHVFFSTINRNTKSWLMAVVGAEYLLKMVPKGTHDAKKFIRPSELIGWVDQTPLLERHIIGLHYNPITDHFKLGRNVDVNYMVHTQRDSE</sequence>
<name>UBIG_YERP3</name>
<comment type="function">
    <text evidence="1">O-methyltransferase that catalyzes the 2 O-methylation steps in the ubiquinone biosynthetic pathway.</text>
</comment>
<comment type="catalytic activity">
    <reaction evidence="1">
        <text>a 3-demethylubiquinol + S-adenosyl-L-methionine = a ubiquinol + S-adenosyl-L-homocysteine + H(+)</text>
        <dbReference type="Rhea" id="RHEA:44380"/>
        <dbReference type="Rhea" id="RHEA-COMP:9566"/>
        <dbReference type="Rhea" id="RHEA-COMP:10914"/>
        <dbReference type="ChEBI" id="CHEBI:15378"/>
        <dbReference type="ChEBI" id="CHEBI:17976"/>
        <dbReference type="ChEBI" id="CHEBI:57856"/>
        <dbReference type="ChEBI" id="CHEBI:59789"/>
        <dbReference type="ChEBI" id="CHEBI:84422"/>
        <dbReference type="EC" id="2.1.1.64"/>
    </reaction>
</comment>
<comment type="catalytic activity">
    <reaction evidence="1">
        <text>a 3-(all-trans-polyprenyl)benzene-1,2-diol + S-adenosyl-L-methionine = a 2-methoxy-6-(all-trans-polyprenyl)phenol + S-adenosyl-L-homocysteine + H(+)</text>
        <dbReference type="Rhea" id="RHEA:31411"/>
        <dbReference type="Rhea" id="RHEA-COMP:9550"/>
        <dbReference type="Rhea" id="RHEA-COMP:9551"/>
        <dbReference type="ChEBI" id="CHEBI:15378"/>
        <dbReference type="ChEBI" id="CHEBI:57856"/>
        <dbReference type="ChEBI" id="CHEBI:59789"/>
        <dbReference type="ChEBI" id="CHEBI:62729"/>
        <dbReference type="ChEBI" id="CHEBI:62731"/>
        <dbReference type="EC" id="2.1.1.222"/>
    </reaction>
</comment>
<comment type="pathway">
    <text evidence="1">Cofactor biosynthesis; ubiquinone biosynthesis.</text>
</comment>
<comment type="similarity">
    <text evidence="1">Belongs to the methyltransferase superfamily. UbiG/COQ3 family.</text>
</comment>
<feature type="chain" id="PRO_1000060390" description="Ubiquinone biosynthesis O-methyltransferase">
    <location>
        <begin position="1"/>
        <end position="242"/>
    </location>
</feature>
<feature type="binding site" evidence="1">
    <location>
        <position position="44"/>
    </location>
    <ligand>
        <name>S-adenosyl-L-methionine</name>
        <dbReference type="ChEBI" id="CHEBI:59789"/>
    </ligand>
</feature>
<feature type="binding site" evidence="1">
    <location>
        <position position="64"/>
    </location>
    <ligand>
        <name>S-adenosyl-L-methionine</name>
        <dbReference type="ChEBI" id="CHEBI:59789"/>
    </ligand>
</feature>
<feature type="binding site" evidence="1">
    <location>
        <position position="85"/>
    </location>
    <ligand>
        <name>S-adenosyl-L-methionine</name>
        <dbReference type="ChEBI" id="CHEBI:59789"/>
    </ligand>
</feature>
<feature type="binding site" evidence="1">
    <location>
        <position position="129"/>
    </location>
    <ligand>
        <name>S-adenosyl-L-methionine</name>
        <dbReference type="ChEBI" id="CHEBI:59789"/>
    </ligand>
</feature>
<keyword id="KW-0489">Methyltransferase</keyword>
<keyword id="KW-0949">S-adenosyl-L-methionine</keyword>
<keyword id="KW-0808">Transferase</keyword>
<keyword id="KW-0831">Ubiquinone biosynthesis</keyword>
<protein>
    <recommendedName>
        <fullName evidence="1">Ubiquinone biosynthesis O-methyltransferase</fullName>
    </recommendedName>
    <alternativeName>
        <fullName evidence="1">2-polyprenyl-6-hydroxyphenol methylase</fullName>
        <ecNumber evidence="1">2.1.1.222</ecNumber>
    </alternativeName>
    <alternativeName>
        <fullName evidence="1">3-demethylubiquinone 3-O-methyltransferase</fullName>
        <ecNumber evidence="1">2.1.1.64</ecNumber>
    </alternativeName>
</protein>
<accession>A7FKF4</accession>
<evidence type="ECO:0000255" key="1">
    <source>
        <dbReference type="HAMAP-Rule" id="MF_00472"/>
    </source>
</evidence>
<gene>
    <name evidence="1" type="primary">ubiG</name>
    <name type="ordered locus">YpsIP31758_2768</name>
</gene>
<organism>
    <name type="scientific">Yersinia pseudotuberculosis serotype O:1b (strain IP 31758)</name>
    <dbReference type="NCBI Taxonomy" id="349747"/>
    <lineage>
        <taxon>Bacteria</taxon>
        <taxon>Pseudomonadati</taxon>
        <taxon>Pseudomonadota</taxon>
        <taxon>Gammaproteobacteria</taxon>
        <taxon>Enterobacterales</taxon>
        <taxon>Yersiniaceae</taxon>
        <taxon>Yersinia</taxon>
    </lineage>
</organism>
<reference key="1">
    <citation type="journal article" date="2007" name="PLoS Genet.">
        <title>The complete genome sequence of Yersinia pseudotuberculosis IP31758, the causative agent of Far East scarlet-like fever.</title>
        <authorList>
            <person name="Eppinger M."/>
            <person name="Rosovitz M.J."/>
            <person name="Fricke W.F."/>
            <person name="Rasko D.A."/>
            <person name="Kokorina G."/>
            <person name="Fayolle C."/>
            <person name="Lindler L.E."/>
            <person name="Carniel E."/>
            <person name="Ravel J."/>
        </authorList>
    </citation>
    <scope>NUCLEOTIDE SEQUENCE [LARGE SCALE GENOMIC DNA]</scope>
    <source>
        <strain>IP 31758</strain>
    </source>
</reference>